<comment type="function">
    <text evidence="1 2 3 4 5 6 12">May play a role in the transmembrane transport of tetrapyrroles and similar compounds, and thereby contribute to the regulation of tetrapyrrole biosynthesis (PubMed:10409680). Binds tetrapyrroles and promotes the photooxidative degradation of protoporphyrin IX (PubMed:23651039). Binds protoporphyrin IX, hemin, and coproporphyrin III, but does not bind delta-aminolevulinic acid (PubMed:20541505, PubMed:23952237, PubMed:25635101). Can bind bilirubin, curcumin, gossypol, retinoic acid, cholesterol and the benzodiazepine receptor agonist PK-11195 (in vitro) (PubMed:23952237, PubMed:25635101). Plays a role in the response to low oxygen levels and in the regulation of the biosynthesis of photosynthetic pigments (PubMed:10409680, PubMed:10681549, PubMed:7673149).</text>
</comment>
<comment type="subunit">
    <text evidence="1 2 4 5">Homodimer.</text>
</comment>
<comment type="interaction">
    <interactant intactId="EBI-15859752">
        <id>Q9RFC8</id>
    </interactant>
    <interactant intactId="EBI-15859752">
        <id>Q9RFC8</id>
        <label>tspO</label>
    </interactant>
    <organismsDiffer>false</organismsDiffer>
    <experiments>4</experiments>
</comment>
<comment type="subcellular location">
    <subcellularLocation>
        <location evidence="1 2 3 4 5 6">Membrane</location>
        <topology evidence="2 5">Multi-pass membrane protein</topology>
    </subcellularLocation>
    <subcellularLocation>
        <location evidence="13">Cell inner membrane</location>
        <topology evidence="2 5">Multi-pass membrane protein</topology>
    </subcellularLocation>
    <text evidence="2 11">Outer membrane proteins generally mediate transport processes by forming beta-barrel structures, and unlike TspO, their transmembrane domains do not contain any helices. Detected in the cell inner membrane when expressed in E.coli (PubMed:20541505). This suggest that TspO is in the inner membrane, even if experiments shown in PubMed:7673149 suggest location in the outer membrane.</text>
</comment>
<comment type="induction">
    <text evidence="6">Up-regulated during photosynthetic growth, when compared to aerobic growth in the dark (at protein level).</text>
</comment>
<comment type="disruption phenotype">
    <text evidence="6">No effect on chemoheterotrophic growth, and no defects in the production of photosynthetic pigments. When oxygen levels are reduced during chemoheterotrophic growth, mutant cells respond more rapidly than wild-type and display faster accumulation of carotenoids and bacteriochlorophylls.</text>
</comment>
<comment type="similarity">
    <text evidence="11">Belongs to the TspO/BZRP family.</text>
</comment>
<gene>
    <name evidence="7 10" type="primary">tspO</name>
    <name evidence="10" type="synonym">crtK</name>
</gene>
<sequence length="158" mass="17976">MNMDWALFLTFLAACGAPATTGALLKPDEWYDNLNKPWWNPPRWVFPLAWTSLYFLMSLAAMRVAQLEGSGQALAFYAAQLAFNTLWTPVFFGMKRMATALAVVMVMWLFVAATMWAFFQLDTWAGVLFVPYLIWATAATGLNFEAMRLNWNRPEARA</sequence>
<evidence type="ECO:0000269" key="1">
    <source>
    </source>
</evidence>
<evidence type="ECO:0000269" key="2">
    <source>
    </source>
</evidence>
<evidence type="ECO:0000269" key="3">
    <source>
    </source>
</evidence>
<evidence type="ECO:0000269" key="4">
    <source>
    </source>
</evidence>
<evidence type="ECO:0000269" key="5">
    <source>
    </source>
</evidence>
<evidence type="ECO:0000269" key="6">
    <source>
    </source>
</evidence>
<evidence type="ECO:0000303" key="7">
    <source>
    </source>
</evidence>
<evidence type="ECO:0000303" key="8">
    <source>
    </source>
</evidence>
<evidence type="ECO:0000303" key="9">
    <source>
    </source>
</evidence>
<evidence type="ECO:0000303" key="10">
    <source>
    </source>
</evidence>
<evidence type="ECO:0000305" key="11"/>
<evidence type="ECO:0000305" key="12">
    <source>
    </source>
</evidence>
<evidence type="ECO:0000305" key="13">
    <source>
    </source>
</evidence>
<evidence type="ECO:0000312" key="14">
    <source>
        <dbReference type="EMBL" id="AAF24291.1"/>
    </source>
</evidence>
<evidence type="ECO:0007829" key="15">
    <source>
        <dbReference type="PDB" id="4UC1"/>
    </source>
</evidence>
<evidence type="ECO:0007829" key="16">
    <source>
        <dbReference type="PDB" id="4UC3"/>
    </source>
</evidence>
<evidence type="ECO:0007829" key="17">
    <source>
        <dbReference type="PDB" id="8E7Y"/>
    </source>
</evidence>
<organism evidence="14">
    <name type="scientific">Cereibacter sphaeroides</name>
    <name type="common">Rhodobacter sphaeroides</name>
    <dbReference type="NCBI Taxonomy" id="1063"/>
    <lineage>
        <taxon>Bacteria</taxon>
        <taxon>Pseudomonadati</taxon>
        <taxon>Pseudomonadota</taxon>
        <taxon>Alphaproteobacteria</taxon>
        <taxon>Rhodobacterales</taxon>
        <taxon>Paracoccaceae</taxon>
        <taxon>Cereibacter</taxon>
    </lineage>
</organism>
<feature type="chain" id="PRO_0000432576" description="Tryptophan-rich sensory protein">
    <location>
        <begin position="1"/>
        <end position="158"/>
    </location>
</feature>
<feature type="transmembrane region" description="Helical; Name=1" evidence="5">
    <location>
        <begin position="5"/>
        <end position="25"/>
    </location>
</feature>
<feature type="transmembrane region" description="Helical; Name=2" evidence="5">
    <location>
        <begin position="44"/>
        <end position="65"/>
    </location>
</feature>
<feature type="transmembrane region" description="Helical; Name=3" evidence="5">
    <location>
        <begin position="73"/>
        <end position="93"/>
    </location>
</feature>
<feature type="transmembrane region" description="Helical; Name=4" evidence="5">
    <location>
        <begin position="97"/>
        <end position="119"/>
    </location>
</feature>
<feature type="transmembrane region" description="Helical; Name=5" evidence="5">
    <location>
        <begin position="124"/>
        <end position="144"/>
    </location>
</feature>
<feature type="mutagenesis site" description="Leads to decreased levels of the protein and increased levels of carotenoids and bacteriochlorophylls." evidence="1">
    <original>C</original>
    <variation>S</variation>
    <location>
        <position position="15"/>
    </location>
</feature>
<feature type="mutagenesis site" description="Slightly increased levels of carotenoids and bacteriochlorophylls." evidence="1">
    <original>W</original>
    <variation>F</variation>
    <location>
        <position position="30"/>
    </location>
</feature>
<feature type="mutagenesis site" description="Decreases growth rate 2-3 fold. Leads to increased levels of the protein and decreased levels of carotenoids and bacteriochlorophylls." evidence="1">
    <original>W</original>
    <variation>C</variation>
    <location>
        <position position="38"/>
    </location>
</feature>
<feature type="mutagenesis site" description="Increased levels of carotenoids and bacteriochlorophylls." evidence="1">
    <original>W</original>
    <variation>F</variation>
    <location>
        <position position="39"/>
    </location>
</feature>
<feature type="mutagenesis site" description="Increased levels of carotenoids and bacteriochlorophylls." evidence="1">
    <original>W</original>
    <variation>F</variation>
    <location>
        <position position="44"/>
    </location>
</feature>
<feature type="mutagenesis site" description="Increased levels of carotenoids and bacteriochlorophylls." evidence="1">
    <original>W</original>
    <variation>F</variation>
    <location>
        <position position="50"/>
    </location>
</feature>
<feature type="mutagenesis site" description="Decreases affinity for protoporphyrin IX, cholesterol and the benzodiazepine receptor agonist PK-11195." evidence="5">
    <original>A</original>
    <variation>T</variation>
    <location>
        <position position="139"/>
    </location>
</feature>
<feature type="helix" evidence="15">
    <location>
        <begin position="5"/>
        <end position="14"/>
    </location>
</feature>
<feature type="helix" evidence="15">
    <location>
        <begin position="16"/>
        <end position="23"/>
    </location>
</feature>
<feature type="helix" evidence="15">
    <location>
        <begin position="29"/>
        <end position="33"/>
    </location>
</feature>
<feature type="helix" evidence="15">
    <location>
        <begin position="45"/>
        <end position="64"/>
    </location>
</feature>
<feature type="helix" evidence="15">
    <location>
        <begin position="71"/>
        <end position="92"/>
    </location>
</feature>
<feature type="helix" evidence="15">
    <location>
        <begin position="97"/>
        <end position="119"/>
    </location>
</feature>
<feature type="helix" evidence="15">
    <location>
        <begin position="123"/>
        <end position="148"/>
    </location>
</feature>
<feature type="turn" evidence="17">
    <location>
        <begin position="150"/>
        <end position="152"/>
    </location>
</feature>
<feature type="turn" evidence="16">
    <location>
        <begin position="154"/>
        <end position="156"/>
    </location>
</feature>
<protein>
    <recommendedName>
        <fullName evidence="10">Tryptophan-rich sensory protein</fullName>
        <shortName evidence="7 9">TSPO</shortName>
    </recommendedName>
    <alternativeName>
        <fullName evidence="8 9">Translocator protein TspO</fullName>
    </alternativeName>
    <alternativeName>
        <fullName evidence="7">TspO regulatory protein</fullName>
    </alternativeName>
</protein>
<proteinExistence type="evidence at protein level"/>
<reference evidence="14" key="1">
    <citation type="journal article" date="2000" name="Nucleic Acids Res.">
        <title>DNA sequence analysis of the photosynthesis region of Rhodobacter sphaeroides 2.4.1.</title>
        <authorList>
            <person name="Choudhary M."/>
            <person name="Kaplan S."/>
        </authorList>
    </citation>
    <scope>NUCLEOTIDE SEQUENCE [GENOMIC DNA]</scope>
    <source>
        <strain evidence="14">2.4.1</strain>
    </source>
</reference>
<reference key="2">
    <citation type="journal article" date="1995" name="J. Biol. Chem.">
        <title>A sensory transducer homologous to the mammalian peripheral-type benzodiazepine receptor regulates photosynthetic membrane complex formation in Rhodobacter sphaeroides 2.4.1.</title>
        <authorList>
            <person name="Yeliseev A.A."/>
            <person name="Kaplan S."/>
        </authorList>
    </citation>
    <scope>FUNCTION</scope>
    <scope>SUBCELLULAR LOCATION</scope>
    <scope>DISRUPTION PHENOTYPE</scope>
    <scope>INDUCTION</scope>
    <source>
        <strain evidence="10">2.4.1</strain>
    </source>
</reference>
<reference key="3">
    <citation type="journal article" date="1999" name="J. Biol. Chem.">
        <title>A novel mechanism for the regulation of photosynthesis gene expression by the TspO outer membrane protein of Rhodobacter sphaeroides 2.4.1.</title>
        <authorList>
            <person name="Yeliseev A.A."/>
            <person name="Kaplan S."/>
        </authorList>
    </citation>
    <scope>FUNCTION</scope>
    <source>
        <strain evidence="10">2.4.1</strain>
    </source>
</reference>
<reference key="4">
    <citation type="journal article" date="2000" name="J. Biol. Chem.">
        <title>TspO of Rhodobacter sphaeroides. A structural and functional model for the mammalian peripheral benzodiazepine receptor.</title>
        <authorList>
            <person name="Yeliseev A.A."/>
            <person name="Kaplan S."/>
        </authorList>
    </citation>
    <scope>FUNCTION</scope>
    <scope>MUTAGENESIS OF CYS-15; TRP-30; TRP-38; TRP-39; TRP-44 AND TRP-50</scope>
    <scope>SUBCELLULAR LOCATION</scope>
    <scope>SUBUNIT</scope>
    <source>
        <strain evidence="10">2.4.1</strain>
    </source>
</reference>
<reference key="5">
    <citation type="journal article" date="2013" name="Biochemistry">
        <title>Chemical catalysis by the translocator protein (18 kDa).</title>
        <authorList>
            <person name="Ginter C."/>
            <person name="Kiburu I."/>
            <person name="Boudker O."/>
        </authorList>
    </citation>
    <scope>FUNCTION</scope>
    <scope>SUBCELLULAR LOCATION</scope>
</reference>
<reference key="6">
    <citation type="journal article" date="2013" name="Biochemistry">
        <title>Characterization and modeling of the oligomeric state and ligand binding behavior of purified translocator protein 18 kDa from Rhodobacter sphaeroides.</title>
        <authorList>
            <person name="Li F."/>
            <person name="Xia Y."/>
            <person name="Meiler J."/>
            <person name="Ferguson-Miller S."/>
        </authorList>
    </citation>
    <scope>FUNCTION</scope>
    <scope>SUBUNIT</scope>
    <scope>SUBCELLULAR LOCATION</scope>
    <source>
        <strain evidence="8">2.4.1</strain>
    </source>
</reference>
<reference key="7">
    <citation type="journal article" date="2010" name="Structure">
        <title>Three-dimensional structure of TspO by electron cryomicroscopy of helical crystals.</title>
        <authorList>
            <person name="Korkhov V.M."/>
            <person name="Sachse C."/>
            <person name="Short J.M."/>
            <person name="Tate C.G."/>
        </authorList>
    </citation>
    <scope>STRUCTURE BY ELECTRON MICROSCOPY (10.2 ANGSTROMS)</scope>
    <scope>FUNCTION</scope>
    <scope>SUBCELLULAR LOCATION</scope>
    <scope>SUBUNIT</scope>
</reference>
<reference key="8">
    <citation type="journal article" date="2015" name="Science">
        <title>Crystal structures of translocator protein (TSPO) and mutant mimic of a human polymorphism.</title>
        <authorList>
            <person name="Li F."/>
            <person name="Liu J."/>
            <person name="Zheng Y."/>
            <person name="Garavito R.M."/>
            <person name="Ferguson-Miller S."/>
        </authorList>
    </citation>
    <scope>X-RAY CRYSTALLOGRAPHY (1.8 ANGSTROMS) IN COMPLEX WITH PROTOPORPHYRIN IX</scope>
    <scope>FUNCTION</scope>
    <scope>SUBCELLULAR LOCATION</scope>
    <scope>SUBUNIT</scope>
    <scope>MUTAGENESIS OF ALA-139</scope>
    <source>
        <strain evidence="9">2.4.1</strain>
    </source>
</reference>
<name>TSPO_CERSP</name>
<keyword id="KW-0002">3D-structure</keyword>
<keyword id="KW-0997">Cell inner membrane</keyword>
<keyword id="KW-1003">Cell membrane</keyword>
<keyword id="KW-0446">Lipid-binding</keyword>
<keyword id="KW-0472">Membrane</keyword>
<keyword id="KW-0812">Transmembrane</keyword>
<keyword id="KW-1133">Transmembrane helix</keyword>
<keyword id="KW-0813">Transport</keyword>
<accession>Q9RFC8</accession>
<dbReference type="EMBL" id="AF195122">
    <property type="protein sequence ID" value="AAF24291.1"/>
    <property type="molecule type" value="Genomic_DNA"/>
</dbReference>
<dbReference type="PIR" id="A57438">
    <property type="entry name" value="A57438"/>
</dbReference>
<dbReference type="PDB" id="4UC1">
    <property type="method" value="X-ray"/>
    <property type="resolution" value="1.80 A"/>
    <property type="chains" value="A/B/C=1-157"/>
</dbReference>
<dbReference type="PDB" id="4UC2">
    <property type="method" value="X-ray"/>
    <property type="resolution" value="2.40 A"/>
    <property type="chains" value="A/B=2-157"/>
</dbReference>
<dbReference type="PDB" id="4UC3">
    <property type="method" value="X-ray"/>
    <property type="resolution" value="2.50 A"/>
    <property type="chains" value="A/B=3-157"/>
</dbReference>
<dbReference type="PDB" id="5DUO">
    <property type="method" value="X-ray"/>
    <property type="resolution" value="2.40 A"/>
    <property type="chains" value="A/B/C=1-157"/>
</dbReference>
<dbReference type="PDB" id="8E7W">
    <property type="method" value="X-ray"/>
    <property type="resolution" value="2.10 A"/>
    <property type="chains" value="A/B/C=1-158"/>
</dbReference>
<dbReference type="PDB" id="8E7X">
    <property type="method" value="X-ray"/>
    <property type="resolution" value="2.10 A"/>
    <property type="chains" value="A/B/C=1-158"/>
</dbReference>
<dbReference type="PDB" id="8E7Y">
    <property type="method" value="X-ray"/>
    <property type="resolution" value="2.30 A"/>
    <property type="chains" value="A/B=1-158"/>
</dbReference>
<dbReference type="PDB" id="8E7Z">
    <property type="method" value="X-ray"/>
    <property type="resolution" value="2.60 A"/>
    <property type="chains" value="A/B/C=1-158"/>
</dbReference>
<dbReference type="PDBsum" id="4UC1"/>
<dbReference type="PDBsum" id="4UC2"/>
<dbReference type="PDBsum" id="4UC3"/>
<dbReference type="PDBsum" id="5DUO"/>
<dbReference type="PDBsum" id="8E7W"/>
<dbReference type="PDBsum" id="8E7X"/>
<dbReference type="PDBsum" id="8E7Y"/>
<dbReference type="PDBsum" id="8E7Z"/>
<dbReference type="SMR" id="Q9RFC8"/>
<dbReference type="DIP" id="DIP-58981N"/>
<dbReference type="OMA" id="WSWLFFG"/>
<dbReference type="EvolutionaryTrace" id="Q9RFC8"/>
<dbReference type="GO" id="GO:0016020">
    <property type="term" value="C:membrane"/>
    <property type="evidence" value="ECO:0000314"/>
    <property type="project" value="UniProtKB"/>
</dbReference>
<dbReference type="GO" id="GO:0005886">
    <property type="term" value="C:plasma membrane"/>
    <property type="evidence" value="ECO:0007669"/>
    <property type="project" value="UniProtKB-SubCell"/>
</dbReference>
<dbReference type="GO" id="GO:0042802">
    <property type="term" value="F:identical protein binding"/>
    <property type="evidence" value="ECO:0000353"/>
    <property type="project" value="IntAct"/>
</dbReference>
<dbReference type="GO" id="GO:0008289">
    <property type="term" value="F:lipid binding"/>
    <property type="evidence" value="ECO:0007669"/>
    <property type="project" value="UniProtKB-KW"/>
</dbReference>
<dbReference type="GO" id="GO:0046906">
    <property type="term" value="F:tetrapyrrole binding"/>
    <property type="evidence" value="ECO:0000314"/>
    <property type="project" value="UniProtKB"/>
</dbReference>
<dbReference type="GO" id="GO:0033013">
    <property type="term" value="P:tetrapyrrole metabolic process"/>
    <property type="evidence" value="ECO:0000314"/>
    <property type="project" value="UniProtKB"/>
</dbReference>
<dbReference type="CDD" id="cd15904">
    <property type="entry name" value="TSPO_MBR"/>
    <property type="match status" value="1"/>
</dbReference>
<dbReference type="FunFam" id="1.20.1260.100:FF:000002">
    <property type="entry name" value="TspO and MBR related proteins"/>
    <property type="match status" value="1"/>
</dbReference>
<dbReference type="Gene3D" id="1.20.1260.100">
    <property type="entry name" value="TspO/MBR protein"/>
    <property type="match status" value="1"/>
</dbReference>
<dbReference type="InterPro" id="IPR038330">
    <property type="entry name" value="TspO/MBR-related_sf"/>
</dbReference>
<dbReference type="InterPro" id="IPR004307">
    <property type="entry name" value="TspO_MBR"/>
</dbReference>
<dbReference type="NCBIfam" id="NF047825">
    <property type="entry name" value="T-richsensTspOAlph"/>
    <property type="match status" value="1"/>
</dbReference>
<dbReference type="PANTHER" id="PTHR10057">
    <property type="entry name" value="PERIPHERAL-TYPE BENZODIAZEPINE RECEPTOR"/>
    <property type="match status" value="1"/>
</dbReference>
<dbReference type="PANTHER" id="PTHR10057:SF0">
    <property type="entry name" value="TRANSLOCATOR PROTEIN"/>
    <property type="match status" value="1"/>
</dbReference>
<dbReference type="Pfam" id="PF03073">
    <property type="entry name" value="TspO_MBR"/>
    <property type="match status" value="1"/>
</dbReference>
<dbReference type="PIRSF" id="PIRSF005859">
    <property type="entry name" value="PBR"/>
    <property type="match status" value="1"/>
</dbReference>